<organism>
    <name type="scientific">Cryptococcus neoformans var. neoformans serotype D (strain B-3501A)</name>
    <name type="common">Filobasidiella neoformans</name>
    <dbReference type="NCBI Taxonomy" id="283643"/>
    <lineage>
        <taxon>Eukaryota</taxon>
        <taxon>Fungi</taxon>
        <taxon>Dikarya</taxon>
        <taxon>Basidiomycota</taxon>
        <taxon>Agaricomycotina</taxon>
        <taxon>Tremellomycetes</taxon>
        <taxon>Tremellales</taxon>
        <taxon>Cryptococcaceae</taxon>
        <taxon>Cryptococcus</taxon>
        <taxon>Cryptococcus neoformans species complex</taxon>
    </lineage>
</organism>
<proteinExistence type="inferred from homology"/>
<keyword id="KW-0507">mRNA processing</keyword>
<keyword id="KW-0508">mRNA splicing</keyword>
<keyword id="KW-0539">Nucleus</keyword>
<keyword id="KW-0747">Spliceosome</keyword>
<reference key="1">
    <citation type="journal article" date="2005" name="Science">
        <title>The genome of the basidiomycetous yeast and human pathogen Cryptococcus neoformans.</title>
        <authorList>
            <person name="Loftus B.J."/>
            <person name="Fung E."/>
            <person name="Roncaglia P."/>
            <person name="Rowley D."/>
            <person name="Amedeo P."/>
            <person name="Bruno D."/>
            <person name="Vamathevan J."/>
            <person name="Miranda M."/>
            <person name="Anderson I.J."/>
            <person name="Fraser J.A."/>
            <person name="Allen J.E."/>
            <person name="Bosdet I.E."/>
            <person name="Brent M.R."/>
            <person name="Chiu R."/>
            <person name="Doering T.L."/>
            <person name="Donlin M.J."/>
            <person name="D'Souza C.A."/>
            <person name="Fox D.S."/>
            <person name="Grinberg V."/>
            <person name="Fu J."/>
            <person name="Fukushima M."/>
            <person name="Haas B.J."/>
            <person name="Huang J.C."/>
            <person name="Janbon G."/>
            <person name="Jones S.J.M."/>
            <person name="Koo H.L."/>
            <person name="Krzywinski M.I."/>
            <person name="Kwon-Chung K.J."/>
            <person name="Lengeler K.B."/>
            <person name="Maiti R."/>
            <person name="Marra M.A."/>
            <person name="Marra R.E."/>
            <person name="Mathewson C.A."/>
            <person name="Mitchell T.G."/>
            <person name="Pertea M."/>
            <person name="Riggs F.R."/>
            <person name="Salzberg S.L."/>
            <person name="Schein J.E."/>
            <person name="Shvartsbeyn A."/>
            <person name="Shin H."/>
            <person name="Shumway M."/>
            <person name="Specht C.A."/>
            <person name="Suh B.B."/>
            <person name="Tenney A."/>
            <person name="Utterback T.R."/>
            <person name="Wickes B.L."/>
            <person name="Wortman J.R."/>
            <person name="Wye N.H."/>
            <person name="Kronstad J.W."/>
            <person name="Lodge J.K."/>
            <person name="Heitman J."/>
            <person name="Davis R.W."/>
            <person name="Fraser C.M."/>
            <person name="Hyman R.W."/>
        </authorList>
    </citation>
    <scope>NUCLEOTIDE SEQUENCE [LARGE SCALE GENOMIC DNA]</scope>
    <source>
        <strain>B-3501A</strain>
    </source>
</reference>
<comment type="function">
    <text evidence="1">Involved in pre-mRNA splicing.</text>
</comment>
<comment type="subunit">
    <text evidence="1">Associated with the spliceosome.</text>
</comment>
<comment type="subcellular location">
    <subcellularLocation>
        <location evidence="1">Nucleus</location>
    </subcellularLocation>
</comment>
<comment type="similarity">
    <text evidence="3">Belongs to the SNW family.</text>
</comment>
<evidence type="ECO:0000250" key="1"/>
<evidence type="ECO:0000256" key="2">
    <source>
        <dbReference type="SAM" id="MobiDB-lite"/>
    </source>
</evidence>
<evidence type="ECO:0000305" key="3"/>
<sequence>MIHSHNNNLSFCSQLITVRKMAALTRALPAPLHTSTTEYEEVPAPLPATPGPQLPKYGQRKGWKPKTAADFNGGGAYPECHVAQYPLDMGKKNKGQGSTLALQVDQDGLVRYDAIAQHGRAPGSRVQSSFKDLVPLANRTDVTESERQMERPDDLSVAETAERTRLALERITHGKIKAAQPKHVPKTNSDATYIRYTPANQSADEGKQRIIKMTEVQEDPLEPPRFKHKKIPRGPAEPPPPVLQSPPRAATAQDQKDWMIPPCISNWKNNKGYTIPLDKRLAADGRGLQDVHINDNFAKFSESLYIADRHIREEVRARAQLQQLLAQKQKTSKEEELRLLAQRAREDRSGLSSSVSGSVAAASASRLPAETGINLGGYGSESGSEEESDEEEEDEEAIRERNIVREEKRREREKEMRMSNMGSEMRAKMLAKEANRDISEKIALGLAKPSASKETLLDSRLFNREALSTGFASEDSYNLYDKPLFAGSSAAAAIYRPAGSSRNDESFGGGTEEGIKEEMSKDRFQLGNATRGFEGAEGVEAREGPVQFEKDTIVALDGSADPFGVEQFMDAARRGGKRTAEDRDEERRKRARDE</sequence>
<accession>P0CR57</accession>
<accession>Q55JA7</accession>
<accession>Q5KCF5</accession>
<gene>
    <name type="primary">PRP45</name>
    <name type="ordered locus">CNBL0780</name>
</gene>
<feature type="chain" id="PRO_0000410290" description="Pre-mRNA-processing protein 45">
    <location>
        <begin position="1"/>
        <end position="594"/>
    </location>
</feature>
<feature type="region of interest" description="Disordered" evidence="2">
    <location>
        <begin position="36"/>
        <end position="63"/>
    </location>
</feature>
<feature type="region of interest" description="Disordered" evidence="2">
    <location>
        <begin position="223"/>
        <end position="254"/>
    </location>
</feature>
<feature type="region of interest" description="Disordered" evidence="2">
    <location>
        <begin position="370"/>
        <end position="426"/>
    </location>
</feature>
<feature type="region of interest" description="Disordered" evidence="2">
    <location>
        <begin position="498"/>
        <end position="523"/>
    </location>
</feature>
<feature type="region of interest" description="Disordered" evidence="2">
    <location>
        <begin position="566"/>
        <end position="594"/>
    </location>
</feature>
<feature type="compositionally biased region" description="Pro residues" evidence="2">
    <location>
        <begin position="44"/>
        <end position="53"/>
    </location>
</feature>
<feature type="compositionally biased region" description="Pro residues" evidence="2">
    <location>
        <begin position="235"/>
        <end position="244"/>
    </location>
</feature>
<feature type="compositionally biased region" description="Acidic residues" evidence="2">
    <location>
        <begin position="383"/>
        <end position="397"/>
    </location>
</feature>
<feature type="compositionally biased region" description="Basic and acidic residues" evidence="2">
    <location>
        <begin position="398"/>
        <end position="417"/>
    </location>
</feature>
<feature type="compositionally biased region" description="Basic and acidic residues" evidence="2">
    <location>
        <begin position="513"/>
        <end position="523"/>
    </location>
</feature>
<feature type="compositionally biased region" description="Basic and acidic residues" evidence="2">
    <location>
        <begin position="578"/>
        <end position="594"/>
    </location>
</feature>
<name>PRP45_CRYNB</name>
<dbReference type="EMBL" id="AAEY01000056">
    <property type="protein sequence ID" value="EAL17816.1"/>
    <property type="molecule type" value="Genomic_DNA"/>
</dbReference>
<dbReference type="RefSeq" id="XP_772463.1">
    <property type="nucleotide sequence ID" value="XM_767370.1"/>
</dbReference>
<dbReference type="SMR" id="P0CR57"/>
<dbReference type="GeneID" id="4939127"/>
<dbReference type="KEGG" id="cnb:CNBL0780"/>
<dbReference type="VEuPathDB" id="FungiDB:CNBL0780"/>
<dbReference type="HOGENOM" id="CLU_006601_2_0_1"/>
<dbReference type="OrthoDB" id="5520at5206"/>
<dbReference type="GO" id="GO:0005681">
    <property type="term" value="C:spliceosomal complex"/>
    <property type="evidence" value="ECO:0007669"/>
    <property type="project" value="UniProtKB-KW"/>
</dbReference>
<dbReference type="GO" id="GO:0000398">
    <property type="term" value="P:mRNA splicing, via spliceosome"/>
    <property type="evidence" value="ECO:0007669"/>
    <property type="project" value="InterPro"/>
</dbReference>
<dbReference type="InterPro" id="IPR017862">
    <property type="entry name" value="SKI-int_prot_SKIP"/>
</dbReference>
<dbReference type="InterPro" id="IPR004015">
    <property type="entry name" value="SKI-int_prot_SKIP_SNW-dom"/>
</dbReference>
<dbReference type="PANTHER" id="PTHR12096">
    <property type="entry name" value="NUCLEAR PROTEIN SKIP-RELATED"/>
    <property type="match status" value="1"/>
</dbReference>
<dbReference type="Pfam" id="PF02731">
    <property type="entry name" value="SKIP_SNW"/>
    <property type="match status" value="1"/>
</dbReference>
<protein>
    <recommendedName>
        <fullName>Pre-mRNA-processing protein 45</fullName>
    </recommendedName>
</protein>